<gene>
    <name type="primary">RPL7B</name>
    <name type="ordered locus">At2g01250</name>
    <name type="ORF">F10A8.13</name>
</gene>
<proteinExistence type="evidence at protein level"/>
<protein>
    <recommendedName>
        <fullName evidence="1">Large ribosomal subunit protein uL30y</fullName>
    </recommendedName>
    <alternativeName>
        <fullName>60S ribosomal protein L7-2</fullName>
    </alternativeName>
</protein>
<keyword id="KW-0025">Alternative splicing</keyword>
<keyword id="KW-1185">Reference proteome</keyword>
<keyword id="KW-0687">Ribonucleoprotein</keyword>
<keyword id="KW-0689">Ribosomal protein</keyword>
<reference key="1">
    <citation type="journal article" date="1999" name="Nature">
        <title>Sequence and analysis of chromosome 2 of the plant Arabidopsis thaliana.</title>
        <authorList>
            <person name="Lin X."/>
            <person name="Kaul S."/>
            <person name="Rounsley S.D."/>
            <person name="Shea T.P."/>
            <person name="Benito M.-I."/>
            <person name="Town C.D."/>
            <person name="Fujii C.Y."/>
            <person name="Mason T.M."/>
            <person name="Bowman C.L."/>
            <person name="Barnstead M.E."/>
            <person name="Feldblyum T.V."/>
            <person name="Buell C.R."/>
            <person name="Ketchum K.A."/>
            <person name="Lee J.J."/>
            <person name="Ronning C.M."/>
            <person name="Koo H.L."/>
            <person name="Moffat K.S."/>
            <person name="Cronin L.A."/>
            <person name="Shen M."/>
            <person name="Pai G."/>
            <person name="Van Aken S."/>
            <person name="Umayam L."/>
            <person name="Tallon L.J."/>
            <person name="Gill J.E."/>
            <person name="Adams M.D."/>
            <person name="Carrera A.J."/>
            <person name="Creasy T.H."/>
            <person name="Goodman H.M."/>
            <person name="Somerville C.R."/>
            <person name="Copenhaver G.P."/>
            <person name="Preuss D."/>
            <person name="Nierman W.C."/>
            <person name="White O."/>
            <person name="Eisen J.A."/>
            <person name="Salzberg S.L."/>
            <person name="Fraser C.M."/>
            <person name="Venter J.C."/>
        </authorList>
    </citation>
    <scope>NUCLEOTIDE SEQUENCE [LARGE SCALE GENOMIC DNA]</scope>
    <source>
        <strain>cv. Columbia</strain>
    </source>
</reference>
<reference key="2">
    <citation type="journal article" date="2017" name="Plant J.">
        <title>Araport11: a complete reannotation of the Arabidopsis thaliana reference genome.</title>
        <authorList>
            <person name="Cheng C.Y."/>
            <person name="Krishnakumar V."/>
            <person name="Chan A.P."/>
            <person name="Thibaud-Nissen F."/>
            <person name="Schobel S."/>
            <person name="Town C.D."/>
        </authorList>
    </citation>
    <scope>GENOME REANNOTATION</scope>
    <source>
        <strain>cv. Columbia</strain>
    </source>
</reference>
<reference key="3">
    <citation type="journal article" date="2003" name="Science">
        <title>Empirical analysis of transcriptional activity in the Arabidopsis genome.</title>
        <authorList>
            <person name="Yamada K."/>
            <person name="Lim J."/>
            <person name="Dale J.M."/>
            <person name="Chen H."/>
            <person name="Shinn P."/>
            <person name="Palm C.J."/>
            <person name="Southwick A.M."/>
            <person name="Wu H.C."/>
            <person name="Kim C.J."/>
            <person name="Nguyen M."/>
            <person name="Pham P.K."/>
            <person name="Cheuk R.F."/>
            <person name="Karlin-Newmann G."/>
            <person name="Liu S.X."/>
            <person name="Lam B."/>
            <person name="Sakano H."/>
            <person name="Wu T."/>
            <person name="Yu G."/>
            <person name="Miranda M."/>
            <person name="Quach H.L."/>
            <person name="Tripp M."/>
            <person name="Chang C.H."/>
            <person name="Lee J.M."/>
            <person name="Toriumi M.J."/>
            <person name="Chan M.M."/>
            <person name="Tang C.C."/>
            <person name="Onodera C.S."/>
            <person name="Deng J.M."/>
            <person name="Akiyama K."/>
            <person name="Ansari Y."/>
            <person name="Arakawa T."/>
            <person name="Banh J."/>
            <person name="Banno F."/>
            <person name="Bowser L."/>
            <person name="Brooks S.Y."/>
            <person name="Carninci P."/>
            <person name="Chao Q."/>
            <person name="Choy N."/>
            <person name="Enju A."/>
            <person name="Goldsmith A.D."/>
            <person name="Gurjal M."/>
            <person name="Hansen N.F."/>
            <person name="Hayashizaki Y."/>
            <person name="Johnson-Hopson C."/>
            <person name="Hsuan V.W."/>
            <person name="Iida K."/>
            <person name="Karnes M."/>
            <person name="Khan S."/>
            <person name="Koesema E."/>
            <person name="Ishida J."/>
            <person name="Jiang P.X."/>
            <person name="Jones T."/>
            <person name="Kawai J."/>
            <person name="Kamiya A."/>
            <person name="Meyers C."/>
            <person name="Nakajima M."/>
            <person name="Narusaka M."/>
            <person name="Seki M."/>
            <person name="Sakurai T."/>
            <person name="Satou M."/>
            <person name="Tamse R."/>
            <person name="Vaysberg M."/>
            <person name="Wallender E.K."/>
            <person name="Wong C."/>
            <person name="Yamamura Y."/>
            <person name="Yuan S."/>
            <person name="Shinozaki K."/>
            <person name="Davis R.W."/>
            <person name="Theologis A."/>
            <person name="Ecker J.R."/>
        </authorList>
    </citation>
    <scope>NUCLEOTIDE SEQUENCE [LARGE SCALE MRNA]</scope>
    <source>
        <strain>cv. Columbia</strain>
    </source>
</reference>
<reference key="4">
    <citation type="submission" date="2002-03" db="EMBL/GenBank/DDBJ databases">
        <title>Full-length cDNA from Arabidopsis thaliana.</title>
        <authorList>
            <person name="Brover V.V."/>
            <person name="Troukhan M.E."/>
            <person name="Alexandrov N.A."/>
            <person name="Lu Y.-P."/>
            <person name="Flavell R.B."/>
            <person name="Feldmann K.A."/>
        </authorList>
    </citation>
    <scope>NUCLEOTIDE SEQUENCE [LARGE SCALE MRNA]</scope>
</reference>
<reference key="5">
    <citation type="journal article" date="1996" name="Plant J.">
        <title>Further progress towards a catalogue of all Arabidopsis genes: analysis of a set of 5000 non-redundant ESTs.</title>
        <authorList>
            <person name="Cooke R."/>
            <person name="Raynal M."/>
            <person name="Laudie M."/>
            <person name="Grellet F."/>
            <person name="Delseny M."/>
            <person name="Morris P.-C."/>
            <person name="Guerrier D."/>
            <person name="Giraudat J."/>
            <person name="Quigley F."/>
            <person name="Clabault G."/>
            <person name="Li Y.-F."/>
            <person name="Mache R."/>
            <person name="Krivitzky M."/>
            <person name="Gy I.J.-J."/>
            <person name="Kreis M."/>
            <person name="Lecharny A."/>
            <person name="Parmentier Y."/>
            <person name="Marbach J."/>
            <person name="Fleck J."/>
            <person name="Clement B."/>
            <person name="Philipps G."/>
            <person name="Herve C."/>
            <person name="Bardet C."/>
            <person name="Tremousaygue D."/>
            <person name="Lescure B."/>
            <person name="Lacomme C."/>
            <person name="Roby D."/>
            <person name="Jourjon M.-F."/>
            <person name="Chabrier P."/>
            <person name="Charpenteau J.-L."/>
            <person name="Desprez T."/>
            <person name="Amselem J."/>
            <person name="Chiapello H."/>
            <person name="Hoefte H."/>
        </authorList>
    </citation>
    <scope>NUCLEOTIDE SEQUENCE [LARGE SCALE MRNA] OF 1-104</scope>
    <source>
        <strain>cv. Columbia</strain>
        <tissue>Seedling</tissue>
    </source>
</reference>
<reference key="6">
    <citation type="journal article" date="2001" name="Plant Physiol.">
        <title>The organization of cytoplasmic ribosomal protein genes in the Arabidopsis genome.</title>
        <authorList>
            <person name="Barakat A."/>
            <person name="Szick-Miranda K."/>
            <person name="Chang I.-F."/>
            <person name="Guyot R."/>
            <person name="Blanc G."/>
            <person name="Cooke R."/>
            <person name="Delseny M."/>
            <person name="Bailey-Serres J."/>
        </authorList>
    </citation>
    <scope>GENE FAMILY ORGANIZATION</scope>
    <scope>NOMENCLATURE</scope>
</reference>
<reference key="7">
    <citation type="journal article" date="2007" name="Mol. Cell. Proteomics">
        <title>Multidimensional protein identification technology (MudPIT) analysis of ubiquitinated proteins in plants.</title>
        <authorList>
            <person name="Maor R."/>
            <person name="Jones A."/>
            <person name="Nuehse T.S."/>
            <person name="Studholme D.J."/>
            <person name="Peck S.C."/>
            <person name="Shirasu K."/>
        </authorList>
    </citation>
    <scope>IDENTIFICATION BY MASS SPECTROMETRY [LARGE SCALE ANALYSIS]</scope>
    <source>
        <strain>cv. Landsberg erecta</strain>
    </source>
</reference>
<reference key="8">
    <citation type="journal article" date="2023" name="Plant Cell">
        <title>An updated nomenclature for plant ribosomal protein genes.</title>
        <authorList>
            <person name="Scarpin M.R."/>
            <person name="Busche M."/>
            <person name="Martinez R.E."/>
            <person name="Harper L.C."/>
            <person name="Reiser L."/>
            <person name="Szakonyi D."/>
            <person name="Merchante C."/>
            <person name="Lan T."/>
            <person name="Xiong W."/>
            <person name="Mo B."/>
            <person name="Tang G."/>
            <person name="Chen X."/>
            <person name="Bailey-Serres J."/>
            <person name="Browning K.S."/>
            <person name="Brunkard J.O."/>
        </authorList>
    </citation>
    <scope>NOMENCLATURE</scope>
</reference>
<organism>
    <name type="scientific">Arabidopsis thaliana</name>
    <name type="common">Mouse-ear cress</name>
    <dbReference type="NCBI Taxonomy" id="3702"/>
    <lineage>
        <taxon>Eukaryota</taxon>
        <taxon>Viridiplantae</taxon>
        <taxon>Streptophyta</taxon>
        <taxon>Embryophyta</taxon>
        <taxon>Tracheophyta</taxon>
        <taxon>Spermatophyta</taxon>
        <taxon>Magnoliopsida</taxon>
        <taxon>eudicotyledons</taxon>
        <taxon>Gunneridae</taxon>
        <taxon>Pentapetalae</taxon>
        <taxon>rosids</taxon>
        <taxon>malvids</taxon>
        <taxon>Brassicales</taxon>
        <taxon>Brassicaceae</taxon>
        <taxon>Camelineae</taxon>
        <taxon>Arabidopsis</taxon>
    </lineage>
</organism>
<feature type="chain" id="PRO_0000104639" description="Large ribosomal subunit protein uL30y">
    <location>
        <begin position="1"/>
        <end position="242"/>
    </location>
</feature>
<feature type="sequence conflict" description="In Ref. 5; CAA82395." evidence="2" ref="5">
    <original>A</original>
    <variation>S</variation>
    <location>
        <position position="33"/>
    </location>
</feature>
<feature type="sequence conflict" description="In Ref. 5." evidence="2" ref="5">
    <original>ILQ</original>
    <variation>VSP</variation>
    <location>
        <begin position="102"/>
        <end position="104"/>
    </location>
</feature>
<accession>P60040</accession>
<accession>O80581</accession>
<accession>Q42208</accession>
<accession>Q9ZU42</accession>
<name>RL72_ARATH</name>
<comment type="alternative products">
    <event type="alternative splicing"/>
    <isoform>
        <id>P60040-1</id>
        <name>1</name>
        <sequence type="displayed"/>
    </isoform>
    <text>A number of isoforms are produced. According to EST sequences.</text>
</comment>
<comment type="similarity">
    <text evidence="2">Belongs to the universal ribosomal protein uL30 family.</text>
</comment>
<comment type="sequence caution" evidence="2">
    <conflict type="erroneous initiation">
        <sequence resource="EMBL-CDS" id="CAA82395"/>
    </conflict>
</comment>
<evidence type="ECO:0000303" key="1">
    <source>
    </source>
</evidence>
<evidence type="ECO:0000305" key="2"/>
<dbReference type="EMBL" id="AC006200">
    <property type="protein sequence ID" value="AAD14525.1"/>
    <property type="molecule type" value="Genomic_DNA"/>
</dbReference>
<dbReference type="EMBL" id="CP002685">
    <property type="protein sequence ID" value="AEC05420.1"/>
    <property type="molecule type" value="Genomic_DNA"/>
</dbReference>
<dbReference type="EMBL" id="AF370484">
    <property type="protein sequence ID" value="AAK43861.1"/>
    <property type="molecule type" value="mRNA"/>
</dbReference>
<dbReference type="EMBL" id="AY045994">
    <property type="protein sequence ID" value="AAK76668.1"/>
    <property type="molecule type" value="mRNA"/>
</dbReference>
<dbReference type="EMBL" id="AY079328">
    <property type="protein sequence ID" value="AAL85059.1"/>
    <property type="molecule type" value="mRNA"/>
</dbReference>
<dbReference type="EMBL" id="AY081698">
    <property type="protein sequence ID" value="AAM10260.1"/>
    <property type="molecule type" value="mRNA"/>
</dbReference>
<dbReference type="EMBL" id="AY085139">
    <property type="protein sequence ID" value="AAM61692.1"/>
    <property type="molecule type" value="mRNA"/>
</dbReference>
<dbReference type="EMBL" id="Z29141">
    <property type="protein sequence ID" value="CAA82395.1"/>
    <property type="status" value="ALT_INIT"/>
    <property type="molecule type" value="mRNA"/>
</dbReference>
<dbReference type="PIR" id="D84422">
    <property type="entry name" value="D84422"/>
</dbReference>
<dbReference type="RefSeq" id="NP_178234.1">
    <molecule id="P60040-1"/>
    <property type="nucleotide sequence ID" value="NM_126186.4"/>
</dbReference>
<dbReference type="SMR" id="P60040"/>
<dbReference type="BioGRID" id="56">
    <property type="interactions" value="173"/>
</dbReference>
<dbReference type="FunCoup" id="P60040">
    <property type="interactions" value="3599"/>
</dbReference>
<dbReference type="IntAct" id="P60040">
    <property type="interactions" value="4"/>
</dbReference>
<dbReference type="STRING" id="3702.P60040"/>
<dbReference type="PaxDb" id="3702-AT2G01250.1"/>
<dbReference type="ProteomicsDB" id="226890">
    <molecule id="P60040-1"/>
</dbReference>
<dbReference type="EnsemblPlants" id="AT2G01250.1">
    <molecule id="P60040-1"/>
    <property type="protein sequence ID" value="AT2G01250.1"/>
    <property type="gene ID" value="AT2G01250"/>
</dbReference>
<dbReference type="GeneID" id="814652"/>
<dbReference type="Gramene" id="AT2G01250.1">
    <molecule id="P60040-1"/>
    <property type="protein sequence ID" value="AT2G01250.1"/>
    <property type="gene ID" value="AT2G01250"/>
</dbReference>
<dbReference type="KEGG" id="ath:AT2G01250"/>
<dbReference type="Araport" id="AT2G01250"/>
<dbReference type="TAIR" id="AT2G01250">
    <property type="gene designation" value="RPL7B"/>
</dbReference>
<dbReference type="eggNOG" id="KOG3184">
    <property type="taxonomic scope" value="Eukaryota"/>
</dbReference>
<dbReference type="HOGENOM" id="CLU_055156_0_2_1"/>
<dbReference type="InParanoid" id="P60040"/>
<dbReference type="OMA" id="TYGVPNR"/>
<dbReference type="OrthoDB" id="28644at2759"/>
<dbReference type="PhylomeDB" id="P60040"/>
<dbReference type="CD-CODE" id="4299E36E">
    <property type="entry name" value="Nucleolus"/>
</dbReference>
<dbReference type="PRO" id="PR:P60040"/>
<dbReference type="Proteomes" id="UP000006548">
    <property type="component" value="Chromosome 2"/>
</dbReference>
<dbReference type="ExpressionAtlas" id="P60040">
    <property type="expression patterns" value="baseline and differential"/>
</dbReference>
<dbReference type="GO" id="GO:0009507">
    <property type="term" value="C:chloroplast"/>
    <property type="evidence" value="ECO:0007005"/>
    <property type="project" value="TAIR"/>
</dbReference>
<dbReference type="GO" id="GO:0022625">
    <property type="term" value="C:cytosolic large ribosomal subunit"/>
    <property type="evidence" value="ECO:0007005"/>
    <property type="project" value="TAIR"/>
</dbReference>
<dbReference type="GO" id="GO:0022626">
    <property type="term" value="C:cytosolic ribosome"/>
    <property type="evidence" value="ECO:0007005"/>
    <property type="project" value="TAIR"/>
</dbReference>
<dbReference type="GO" id="GO:0005739">
    <property type="term" value="C:mitochondrion"/>
    <property type="evidence" value="ECO:0007005"/>
    <property type="project" value="TAIR"/>
</dbReference>
<dbReference type="GO" id="GO:0009505">
    <property type="term" value="C:plant-type cell wall"/>
    <property type="evidence" value="ECO:0007005"/>
    <property type="project" value="TAIR"/>
</dbReference>
<dbReference type="GO" id="GO:0000325">
    <property type="term" value="C:plant-type vacuole"/>
    <property type="evidence" value="ECO:0007005"/>
    <property type="project" value="TAIR"/>
</dbReference>
<dbReference type="GO" id="GO:0005773">
    <property type="term" value="C:vacuole"/>
    <property type="evidence" value="ECO:0007005"/>
    <property type="project" value="TAIR"/>
</dbReference>
<dbReference type="GO" id="GO:0003729">
    <property type="term" value="F:mRNA binding"/>
    <property type="evidence" value="ECO:0000314"/>
    <property type="project" value="TAIR"/>
</dbReference>
<dbReference type="GO" id="GO:0003735">
    <property type="term" value="F:structural constituent of ribosome"/>
    <property type="evidence" value="ECO:0000314"/>
    <property type="project" value="CAFA"/>
</dbReference>
<dbReference type="GO" id="GO:0000463">
    <property type="term" value="P:maturation of LSU-rRNA from tricistronic rRNA transcript (SSU-rRNA, 5.8S rRNA, LSU-rRNA)"/>
    <property type="evidence" value="ECO:0007669"/>
    <property type="project" value="InterPro"/>
</dbReference>
<dbReference type="CDD" id="cd01657">
    <property type="entry name" value="Ribosomal_L7_archeal_euk"/>
    <property type="match status" value="1"/>
</dbReference>
<dbReference type="FunFam" id="3.30.1390.20:FF:000002">
    <property type="entry name" value="60S ribosomal protein L7"/>
    <property type="match status" value="1"/>
</dbReference>
<dbReference type="FunFam" id="3.30.1390.20:FF:000003">
    <property type="entry name" value="60S ribosomal protein L7"/>
    <property type="match status" value="1"/>
</dbReference>
<dbReference type="Gene3D" id="3.30.1390.20">
    <property type="entry name" value="Ribosomal protein L30, ferredoxin-like fold domain"/>
    <property type="match status" value="1"/>
</dbReference>
<dbReference type="InterPro" id="IPR036919">
    <property type="entry name" value="Ribo_uL30_ferredoxin-like_sf"/>
</dbReference>
<dbReference type="InterPro" id="IPR039699">
    <property type="entry name" value="Ribosomal_uL30"/>
</dbReference>
<dbReference type="InterPro" id="IPR018038">
    <property type="entry name" value="Ribosomal_uL30_CS"/>
</dbReference>
<dbReference type="InterPro" id="IPR005998">
    <property type="entry name" value="Ribosomal_uL30_euk"/>
</dbReference>
<dbReference type="InterPro" id="IPR035808">
    <property type="entry name" value="Ribosomal_uL30_euk_arc"/>
</dbReference>
<dbReference type="InterPro" id="IPR016082">
    <property type="entry name" value="Ribosomal_uL30_ferredoxin-like"/>
</dbReference>
<dbReference type="InterPro" id="IPR012988">
    <property type="entry name" value="Ribosomal_uL30_N_euk"/>
</dbReference>
<dbReference type="NCBIfam" id="TIGR01310">
    <property type="entry name" value="uL30_euk"/>
    <property type="match status" value="1"/>
</dbReference>
<dbReference type="PANTHER" id="PTHR11524">
    <property type="entry name" value="60S RIBOSOMAL PROTEIN L7"/>
    <property type="match status" value="1"/>
</dbReference>
<dbReference type="PANTHER" id="PTHR11524:SF55">
    <property type="entry name" value="LARGE RIBOSOMAL SUBUNIT PROTEIN UL30Y"/>
    <property type="match status" value="1"/>
</dbReference>
<dbReference type="Pfam" id="PF00327">
    <property type="entry name" value="Ribosomal_L30"/>
    <property type="match status" value="1"/>
</dbReference>
<dbReference type="Pfam" id="PF08079">
    <property type="entry name" value="Ribosomal_L30_N"/>
    <property type="match status" value="1"/>
</dbReference>
<dbReference type="SUPFAM" id="SSF55129">
    <property type="entry name" value="Ribosomal protein L30p/L7e"/>
    <property type="match status" value="1"/>
</dbReference>
<dbReference type="PROSITE" id="PS00634">
    <property type="entry name" value="RIBOSOMAL_L30"/>
    <property type="match status" value="1"/>
</dbReference>
<sequence>MVESKVVVPESVLKKRKREEEWALEKKQNVEAAKKKNAENRKLIFKRAEQYSKEYAEKEKELISLKREAKLKGGFYVDPEAKLLFIIRIRGINAIDPKTKKILQLLRLRQIFNGVFLKVNKATMNMLRRVEPYVTYGFPNLKSVKELIYKRGYGKLNHQRIALTDNSIVEQALGKHGIICTEDLIHEILTVGPHFKEANNFLWPFQLKAPLGGLKKKRNHYVEGGDAGNRENFINELIRRMN</sequence>